<evidence type="ECO:0000255" key="1">
    <source>
        <dbReference type="HAMAP-Rule" id="MF_01661"/>
    </source>
</evidence>
<dbReference type="EC" id="5.4.99.62" evidence="1"/>
<dbReference type="EMBL" id="CP000560">
    <property type="protein sequence ID" value="ABS75640.1"/>
    <property type="molecule type" value="Genomic_DNA"/>
</dbReference>
<dbReference type="RefSeq" id="WP_012118603.1">
    <property type="nucleotide sequence ID" value="NC_009725.2"/>
</dbReference>
<dbReference type="SMR" id="A7Z9G4"/>
<dbReference type="GeneID" id="93082455"/>
<dbReference type="KEGG" id="bay:RBAM_033100"/>
<dbReference type="HOGENOM" id="CLU_135498_0_0_9"/>
<dbReference type="UniPathway" id="UPA00916">
    <property type="reaction ID" value="UER00888"/>
</dbReference>
<dbReference type="Proteomes" id="UP000001120">
    <property type="component" value="Chromosome"/>
</dbReference>
<dbReference type="GO" id="GO:0005829">
    <property type="term" value="C:cytosol"/>
    <property type="evidence" value="ECO:0007669"/>
    <property type="project" value="TreeGrafter"/>
</dbReference>
<dbReference type="GO" id="GO:0062193">
    <property type="term" value="F:D-ribose pyranase activity"/>
    <property type="evidence" value="ECO:0007669"/>
    <property type="project" value="UniProtKB-EC"/>
</dbReference>
<dbReference type="GO" id="GO:0016872">
    <property type="term" value="F:intramolecular lyase activity"/>
    <property type="evidence" value="ECO:0007669"/>
    <property type="project" value="UniProtKB-UniRule"/>
</dbReference>
<dbReference type="GO" id="GO:0048029">
    <property type="term" value="F:monosaccharide binding"/>
    <property type="evidence" value="ECO:0007669"/>
    <property type="project" value="InterPro"/>
</dbReference>
<dbReference type="GO" id="GO:0019303">
    <property type="term" value="P:D-ribose catabolic process"/>
    <property type="evidence" value="ECO:0007669"/>
    <property type="project" value="UniProtKB-UniRule"/>
</dbReference>
<dbReference type="Gene3D" id="3.40.1650.10">
    <property type="entry name" value="RbsD-like domain"/>
    <property type="match status" value="1"/>
</dbReference>
<dbReference type="HAMAP" id="MF_01661">
    <property type="entry name" value="D_rib_pyranase"/>
    <property type="match status" value="1"/>
</dbReference>
<dbReference type="InterPro" id="IPR023064">
    <property type="entry name" value="D-ribose_pyranase"/>
</dbReference>
<dbReference type="InterPro" id="IPR023750">
    <property type="entry name" value="RbsD-like_sf"/>
</dbReference>
<dbReference type="InterPro" id="IPR007721">
    <property type="entry name" value="RbsD_FucU"/>
</dbReference>
<dbReference type="NCBIfam" id="NF008761">
    <property type="entry name" value="PRK11797.1"/>
    <property type="match status" value="1"/>
</dbReference>
<dbReference type="PANTHER" id="PTHR37831">
    <property type="entry name" value="D-RIBOSE PYRANASE"/>
    <property type="match status" value="1"/>
</dbReference>
<dbReference type="PANTHER" id="PTHR37831:SF1">
    <property type="entry name" value="D-RIBOSE PYRANASE"/>
    <property type="match status" value="1"/>
</dbReference>
<dbReference type="Pfam" id="PF05025">
    <property type="entry name" value="RbsD_FucU"/>
    <property type="match status" value="1"/>
</dbReference>
<dbReference type="SUPFAM" id="SSF102546">
    <property type="entry name" value="RbsD-like"/>
    <property type="match status" value="1"/>
</dbReference>
<name>RBSD_BACVZ</name>
<feature type="chain" id="PRO_0000346169" description="D-ribose pyranase">
    <location>
        <begin position="1"/>
        <end position="131"/>
    </location>
</feature>
<feature type="active site" description="Proton donor" evidence="1">
    <location>
        <position position="20"/>
    </location>
</feature>
<feature type="binding site" evidence="1">
    <location>
        <position position="28"/>
    </location>
    <ligand>
        <name>substrate</name>
    </ligand>
</feature>
<feature type="binding site" evidence="1">
    <location>
        <position position="98"/>
    </location>
    <ligand>
        <name>substrate</name>
    </ligand>
</feature>
<feature type="binding site" evidence="1">
    <location>
        <begin position="120"/>
        <end position="122"/>
    </location>
    <ligand>
        <name>substrate</name>
    </ligand>
</feature>
<keyword id="KW-0119">Carbohydrate metabolism</keyword>
<keyword id="KW-0963">Cytoplasm</keyword>
<keyword id="KW-0413">Isomerase</keyword>
<accession>A7Z9G4</accession>
<organism>
    <name type="scientific">Bacillus velezensis (strain DSM 23117 / BGSC 10A6 / LMG 26770 / FZB42)</name>
    <name type="common">Bacillus amyloliquefaciens subsp. plantarum</name>
    <dbReference type="NCBI Taxonomy" id="326423"/>
    <lineage>
        <taxon>Bacteria</taxon>
        <taxon>Bacillati</taxon>
        <taxon>Bacillota</taxon>
        <taxon>Bacilli</taxon>
        <taxon>Bacillales</taxon>
        <taxon>Bacillaceae</taxon>
        <taxon>Bacillus</taxon>
        <taxon>Bacillus amyloliquefaciens group</taxon>
    </lineage>
</organism>
<reference key="1">
    <citation type="journal article" date="2007" name="Nat. Biotechnol.">
        <title>Comparative analysis of the complete genome sequence of the plant growth-promoting bacterium Bacillus amyloliquefaciens FZB42.</title>
        <authorList>
            <person name="Chen X.H."/>
            <person name="Koumoutsi A."/>
            <person name="Scholz R."/>
            <person name="Eisenreich A."/>
            <person name="Schneider K."/>
            <person name="Heinemeyer I."/>
            <person name="Morgenstern B."/>
            <person name="Voss B."/>
            <person name="Hess W.R."/>
            <person name="Reva O."/>
            <person name="Junge H."/>
            <person name="Voigt B."/>
            <person name="Jungblut P.R."/>
            <person name="Vater J."/>
            <person name="Suessmuth R."/>
            <person name="Liesegang H."/>
            <person name="Strittmatter A."/>
            <person name="Gottschalk G."/>
            <person name="Borriss R."/>
        </authorList>
    </citation>
    <scope>NUCLEOTIDE SEQUENCE [LARGE SCALE GENOMIC DNA]</scope>
    <source>
        <strain>DSM 23117 / BGSC 10A6 / LMG 26770 / FZB42</strain>
    </source>
</reference>
<comment type="function">
    <text evidence="1">Catalyzes the interconversion of beta-pyran and beta-furan forms of D-ribose.</text>
</comment>
<comment type="catalytic activity">
    <reaction evidence="1">
        <text>beta-D-ribopyranose = beta-D-ribofuranose</text>
        <dbReference type="Rhea" id="RHEA:25432"/>
        <dbReference type="ChEBI" id="CHEBI:27476"/>
        <dbReference type="ChEBI" id="CHEBI:47002"/>
        <dbReference type="EC" id="5.4.99.62"/>
    </reaction>
</comment>
<comment type="pathway">
    <text evidence="1">Carbohydrate metabolism; D-ribose degradation; D-ribose 5-phosphate from beta-D-ribopyranose: step 1/2.</text>
</comment>
<comment type="subunit">
    <text evidence="1">Homodecamer.</text>
</comment>
<comment type="subcellular location">
    <subcellularLocation>
        <location evidence="1">Cytoplasm</location>
    </subcellularLocation>
</comment>
<comment type="similarity">
    <text evidence="1">Belongs to the RbsD / FucU family. RbsD subfamily.</text>
</comment>
<protein>
    <recommendedName>
        <fullName evidence="1">D-ribose pyranase</fullName>
        <ecNumber evidence="1">5.4.99.62</ecNumber>
    </recommendedName>
</protein>
<gene>
    <name evidence="1" type="primary">rbsD</name>
    <name type="ordered locus">RBAM_033100</name>
</gene>
<sequence length="131" mass="14018">MKKHGMLNSHIAKVLADLGHTDLIAIADAGLPVPDGAPKIDLSLTAGVPAFRDVTSLVAGEMAVEKVIAASEIKDANPENASFIESHFSAQTIEYMSHEEFKRLTQKAKAVIRTGEMTPYANCILQAGVIF</sequence>
<proteinExistence type="inferred from homology"/>